<evidence type="ECO:0000250" key="1">
    <source>
        <dbReference type="UniProtKB" id="O95395"/>
    </source>
</evidence>
<evidence type="ECO:0000250" key="2">
    <source>
        <dbReference type="UniProtKB" id="Q7YQE1"/>
    </source>
</evidence>
<evidence type="ECO:0000255" key="3"/>
<evidence type="ECO:0000269" key="4">
    <source>
    </source>
</evidence>
<evidence type="ECO:0000305" key="5"/>
<evidence type="ECO:0000312" key="6">
    <source>
        <dbReference type="HGNC" id="HGNC:16099"/>
    </source>
</evidence>
<reference key="1">
    <citation type="journal article" date="2004" name="Nat. Genet.">
        <title>Complete sequencing and characterization of 21,243 full-length human cDNAs.</title>
        <authorList>
            <person name="Ota T."/>
            <person name="Suzuki Y."/>
            <person name="Nishikawa T."/>
            <person name="Otsuki T."/>
            <person name="Sugiyama T."/>
            <person name="Irie R."/>
            <person name="Wakamatsu A."/>
            <person name="Hayashi K."/>
            <person name="Sato H."/>
            <person name="Nagai K."/>
            <person name="Kimura K."/>
            <person name="Makita H."/>
            <person name="Sekine M."/>
            <person name="Obayashi M."/>
            <person name="Nishi T."/>
            <person name="Shibahara T."/>
            <person name="Tanaka T."/>
            <person name="Ishii S."/>
            <person name="Yamamoto J."/>
            <person name="Saito K."/>
            <person name="Kawai Y."/>
            <person name="Isono Y."/>
            <person name="Nakamura Y."/>
            <person name="Nagahari K."/>
            <person name="Murakami K."/>
            <person name="Yasuda T."/>
            <person name="Iwayanagi T."/>
            <person name="Wagatsuma M."/>
            <person name="Shiratori A."/>
            <person name="Sudo H."/>
            <person name="Hosoiri T."/>
            <person name="Kaku Y."/>
            <person name="Kodaira H."/>
            <person name="Kondo H."/>
            <person name="Sugawara M."/>
            <person name="Takahashi M."/>
            <person name="Kanda K."/>
            <person name="Yokoi T."/>
            <person name="Furuya T."/>
            <person name="Kikkawa E."/>
            <person name="Omura Y."/>
            <person name="Abe K."/>
            <person name="Kamihara K."/>
            <person name="Katsuta N."/>
            <person name="Sato K."/>
            <person name="Tanikawa M."/>
            <person name="Yamazaki M."/>
            <person name="Ninomiya K."/>
            <person name="Ishibashi T."/>
            <person name="Yamashita H."/>
            <person name="Murakawa K."/>
            <person name="Fujimori K."/>
            <person name="Tanai H."/>
            <person name="Kimata M."/>
            <person name="Watanabe M."/>
            <person name="Hiraoka S."/>
            <person name="Chiba Y."/>
            <person name="Ishida S."/>
            <person name="Ono Y."/>
            <person name="Takiguchi S."/>
            <person name="Watanabe S."/>
            <person name="Yosida M."/>
            <person name="Hotuta T."/>
            <person name="Kusano J."/>
            <person name="Kanehori K."/>
            <person name="Takahashi-Fujii A."/>
            <person name="Hara H."/>
            <person name="Tanase T.-O."/>
            <person name="Nomura Y."/>
            <person name="Togiya S."/>
            <person name="Komai F."/>
            <person name="Hara R."/>
            <person name="Takeuchi K."/>
            <person name="Arita M."/>
            <person name="Imose N."/>
            <person name="Musashino K."/>
            <person name="Yuuki H."/>
            <person name="Oshima A."/>
            <person name="Sasaki N."/>
            <person name="Aotsuka S."/>
            <person name="Yoshikawa Y."/>
            <person name="Matsunawa H."/>
            <person name="Ichihara T."/>
            <person name="Shiohata N."/>
            <person name="Sano S."/>
            <person name="Moriya S."/>
            <person name="Momiyama H."/>
            <person name="Satoh N."/>
            <person name="Takami S."/>
            <person name="Terashima Y."/>
            <person name="Suzuki O."/>
            <person name="Nakagawa S."/>
            <person name="Senoh A."/>
            <person name="Mizoguchi H."/>
            <person name="Goto Y."/>
            <person name="Shimizu F."/>
            <person name="Wakebe H."/>
            <person name="Hishigaki H."/>
            <person name="Watanabe T."/>
            <person name="Sugiyama A."/>
            <person name="Takemoto M."/>
            <person name="Kawakami B."/>
            <person name="Yamazaki M."/>
            <person name="Watanabe K."/>
            <person name="Kumagai A."/>
            <person name="Itakura S."/>
            <person name="Fukuzumi Y."/>
            <person name="Fujimori Y."/>
            <person name="Komiyama M."/>
            <person name="Tashiro H."/>
            <person name="Tanigami A."/>
            <person name="Fujiwara T."/>
            <person name="Ono T."/>
            <person name="Yamada K."/>
            <person name="Fujii Y."/>
            <person name="Ozaki K."/>
            <person name="Hirao M."/>
            <person name="Ohmori Y."/>
            <person name="Kawabata A."/>
            <person name="Hikiji T."/>
            <person name="Kobatake N."/>
            <person name="Inagaki H."/>
            <person name="Ikema Y."/>
            <person name="Okamoto S."/>
            <person name="Okitani R."/>
            <person name="Kawakami T."/>
            <person name="Noguchi S."/>
            <person name="Itoh T."/>
            <person name="Shigeta K."/>
            <person name="Senba T."/>
            <person name="Matsumura K."/>
            <person name="Nakajima Y."/>
            <person name="Mizuno T."/>
            <person name="Morinaga M."/>
            <person name="Sasaki M."/>
            <person name="Togashi T."/>
            <person name="Oyama M."/>
            <person name="Hata H."/>
            <person name="Watanabe M."/>
            <person name="Komatsu T."/>
            <person name="Mizushima-Sugano J."/>
            <person name="Satoh T."/>
            <person name="Shirai Y."/>
            <person name="Takahashi Y."/>
            <person name="Nakagawa K."/>
            <person name="Okumura K."/>
            <person name="Nagase T."/>
            <person name="Nomura N."/>
            <person name="Kikuchi H."/>
            <person name="Masuho Y."/>
            <person name="Yamashita R."/>
            <person name="Nakai K."/>
            <person name="Yada T."/>
            <person name="Nakamura Y."/>
            <person name="Ohara O."/>
            <person name="Isogai T."/>
            <person name="Sugano S."/>
        </authorList>
    </citation>
    <scope>NUCLEOTIDE SEQUENCE [LARGE SCALE MRNA]</scope>
    <scope>VARIANT GLU-352</scope>
    <source>
        <tissue>Testis</tissue>
    </source>
</reference>
<reference key="2">
    <citation type="journal article" date="2001" name="Nature">
        <title>The DNA sequence and comparative analysis of human chromosome 20.</title>
        <authorList>
            <person name="Deloukas P."/>
            <person name="Matthews L.H."/>
            <person name="Ashurst J.L."/>
            <person name="Burton J."/>
            <person name="Gilbert J.G.R."/>
            <person name="Jones M."/>
            <person name="Stavrides G."/>
            <person name="Almeida J.P."/>
            <person name="Babbage A.K."/>
            <person name="Bagguley C.L."/>
            <person name="Bailey J."/>
            <person name="Barlow K.F."/>
            <person name="Bates K.N."/>
            <person name="Beard L.M."/>
            <person name="Beare D.M."/>
            <person name="Beasley O.P."/>
            <person name="Bird C.P."/>
            <person name="Blakey S.E."/>
            <person name="Bridgeman A.M."/>
            <person name="Brown A.J."/>
            <person name="Buck D."/>
            <person name="Burrill W.D."/>
            <person name="Butler A.P."/>
            <person name="Carder C."/>
            <person name="Carter N.P."/>
            <person name="Chapman J.C."/>
            <person name="Clamp M."/>
            <person name="Clark G."/>
            <person name="Clark L.N."/>
            <person name="Clark S.Y."/>
            <person name="Clee C.M."/>
            <person name="Clegg S."/>
            <person name="Cobley V.E."/>
            <person name="Collier R.E."/>
            <person name="Connor R.E."/>
            <person name="Corby N.R."/>
            <person name="Coulson A."/>
            <person name="Coville G.J."/>
            <person name="Deadman R."/>
            <person name="Dhami P.D."/>
            <person name="Dunn M."/>
            <person name="Ellington A.G."/>
            <person name="Frankland J.A."/>
            <person name="Fraser A."/>
            <person name="French L."/>
            <person name="Garner P."/>
            <person name="Grafham D.V."/>
            <person name="Griffiths C."/>
            <person name="Griffiths M.N.D."/>
            <person name="Gwilliam R."/>
            <person name="Hall R.E."/>
            <person name="Hammond S."/>
            <person name="Harley J.L."/>
            <person name="Heath P.D."/>
            <person name="Ho S."/>
            <person name="Holden J.L."/>
            <person name="Howden P.J."/>
            <person name="Huckle E."/>
            <person name="Hunt A.R."/>
            <person name="Hunt S.E."/>
            <person name="Jekosch K."/>
            <person name="Johnson C.M."/>
            <person name="Johnson D."/>
            <person name="Kay M.P."/>
            <person name="Kimberley A.M."/>
            <person name="King A."/>
            <person name="Knights A."/>
            <person name="Laird G.K."/>
            <person name="Lawlor S."/>
            <person name="Lehvaeslaiho M.H."/>
            <person name="Leversha M.A."/>
            <person name="Lloyd C."/>
            <person name="Lloyd D.M."/>
            <person name="Lovell J.D."/>
            <person name="Marsh V.L."/>
            <person name="Martin S.L."/>
            <person name="McConnachie L.J."/>
            <person name="McLay K."/>
            <person name="McMurray A.A."/>
            <person name="Milne S.A."/>
            <person name="Mistry D."/>
            <person name="Moore M.J.F."/>
            <person name="Mullikin J.C."/>
            <person name="Nickerson T."/>
            <person name="Oliver K."/>
            <person name="Parker A."/>
            <person name="Patel R."/>
            <person name="Pearce T.A.V."/>
            <person name="Peck A.I."/>
            <person name="Phillimore B.J.C.T."/>
            <person name="Prathalingam S.R."/>
            <person name="Plumb R.W."/>
            <person name="Ramsay H."/>
            <person name="Rice C.M."/>
            <person name="Ross M.T."/>
            <person name="Scott C.E."/>
            <person name="Sehra H.K."/>
            <person name="Shownkeen R."/>
            <person name="Sims S."/>
            <person name="Skuce C.D."/>
            <person name="Smith M.L."/>
            <person name="Soderlund C."/>
            <person name="Steward C.A."/>
            <person name="Sulston J.E."/>
            <person name="Swann R.M."/>
            <person name="Sycamore N."/>
            <person name="Taylor R."/>
            <person name="Tee L."/>
            <person name="Thomas D.W."/>
            <person name="Thorpe A."/>
            <person name="Tracey A."/>
            <person name="Tromans A.C."/>
            <person name="Vaudin M."/>
            <person name="Wall M."/>
            <person name="Wallis J.M."/>
            <person name="Whitehead S.L."/>
            <person name="Whittaker P."/>
            <person name="Willey D.L."/>
            <person name="Williams L."/>
            <person name="Williams S.A."/>
            <person name="Wilming L."/>
            <person name="Wray P.W."/>
            <person name="Hubbard T."/>
            <person name="Durbin R.M."/>
            <person name="Bentley D.R."/>
            <person name="Beck S."/>
            <person name="Rogers J."/>
        </authorList>
    </citation>
    <scope>NUCLEOTIDE SEQUENCE [LARGE SCALE GENOMIC DNA]</scope>
</reference>
<sequence>MSQLRATKSGLVVRAVICIFIFLYLRNPTPAESEEEPAQPEVVECGFYPDELCSALFEGKGAAPQIAKFCKTPHKSEIHAHLHTPGNCSRISRGLHFITRPLSAEEGDFSLAYIITIHKELAMFVQLLRAIYVPQNVYCIHVDEKAPMKYKTAVQTLVNCFENVFISSKTEKVAYAGFTRLQADINCMKVLVHSKFQWNYVINLCGQDFPIKTNREIIHYIRSKWSDKNITPGVIQPLHIKSKTSQSHLEFVPKGSIYAPPNNRFKDKPPHNLTIYFGSAYYVLTRKFVEFILTDIHAKDMLQWSKDIRSPEQHYWVTLNRLKDAPGATPNAGWEGNVRAIKRKSEEGNVHDGCKGRYVEDICVYGPGDLPWLIQSPSLFANKFEPSTDPLVVTCLERRHRLQVLRQAEVPIEPHWHFQQQSHFNMRLNR</sequence>
<proteinExistence type="evidence at transcript level"/>
<feature type="chain" id="PRO_0000299038" description="Probable beta-1,3-galactosyl-O-glycosyl-glycoprotein beta-1,6-N-acetylglucosaminyltransferase 7">
    <location>
        <begin position="1"/>
        <end position="430"/>
    </location>
</feature>
<feature type="topological domain" description="Cytoplasmic" evidence="3">
    <location>
        <begin position="1"/>
        <end position="8"/>
    </location>
</feature>
<feature type="transmembrane region" description="Helical; Signal-anchor for type II membrane protein" evidence="3">
    <location>
        <begin position="9"/>
        <end position="25"/>
    </location>
</feature>
<feature type="topological domain" description="Extracellular" evidence="3">
    <location>
        <begin position="26"/>
        <end position="430"/>
    </location>
</feature>
<feature type="glycosylation site" description="N-linked (GlcNAc...) asparagine" evidence="3">
    <location>
        <position position="87"/>
    </location>
</feature>
<feature type="glycosylation site" description="N-linked (GlcNAc...) asparagine" evidence="3">
    <location>
        <position position="272"/>
    </location>
</feature>
<feature type="disulfide bond" evidence="2">
    <location>
        <begin position="53"/>
        <end position="205"/>
    </location>
</feature>
<feature type="disulfide bond" evidence="2">
    <location>
        <begin position="139"/>
        <end position="354"/>
    </location>
</feature>
<feature type="disulfide bond" evidence="2">
    <location>
        <begin position="160"/>
        <end position="187"/>
    </location>
</feature>
<feature type="disulfide bond" evidence="2">
    <location>
        <begin position="363"/>
        <end position="395"/>
    </location>
</feature>
<feature type="sequence variant" id="VAR_061211" description="In dbSNP:rs34552628." evidence="4">
    <original>D</original>
    <variation>E</variation>
    <location>
        <position position="352"/>
    </location>
</feature>
<feature type="sequence variant" id="VAR_059315" description="In dbSNP:rs3746627.">
    <original>N</original>
    <variation>H</variation>
    <location>
        <position position="425"/>
    </location>
</feature>
<protein>
    <recommendedName>
        <fullName evidence="1">Probable beta-1,3-galactosyl-O-glycosyl-glycoprotein beta-1,6-N-acetylglucosaminyltransferase 7</fullName>
        <ecNumber evidence="1">2.4.1.-</ecNumber>
    </recommendedName>
</protein>
<dbReference type="EC" id="2.4.1.-" evidence="1"/>
<dbReference type="EMBL" id="AK131203">
    <property type="protein sequence ID" value="BAD18395.1"/>
    <property type="molecule type" value="mRNA"/>
</dbReference>
<dbReference type="EMBL" id="AL109806">
    <property type="status" value="NOT_ANNOTATED_CDS"/>
    <property type="molecule type" value="Genomic_DNA"/>
</dbReference>
<dbReference type="RefSeq" id="NP_542182.1">
    <property type="nucleotide sequence ID" value="NM_080615.1"/>
</dbReference>
<dbReference type="SMR" id="Q6ZNI0"/>
<dbReference type="BioGRID" id="126650">
    <property type="interactions" value="1"/>
</dbReference>
<dbReference type="IntAct" id="Q6ZNI0">
    <property type="interactions" value="1"/>
</dbReference>
<dbReference type="STRING" id="9606.ENSP00000482600"/>
<dbReference type="CAZy" id="GT14">
    <property type="family name" value="Glycosyltransferase Family 14"/>
</dbReference>
<dbReference type="GlyCosmos" id="Q6ZNI0">
    <property type="glycosylation" value="2 sites, No reported glycans"/>
</dbReference>
<dbReference type="GlyGen" id="Q6ZNI0">
    <property type="glycosylation" value="2 sites"/>
</dbReference>
<dbReference type="iPTMnet" id="Q6ZNI0"/>
<dbReference type="PhosphoSitePlus" id="Q6ZNI0"/>
<dbReference type="BioMuta" id="GCNT7"/>
<dbReference type="DMDM" id="156630799"/>
<dbReference type="MassIVE" id="Q6ZNI0"/>
<dbReference type="PaxDb" id="9606-ENSP00000482600"/>
<dbReference type="PeptideAtlas" id="Q6ZNI0"/>
<dbReference type="Antibodypedia" id="59236">
    <property type="antibodies" value="156 antibodies from 23 providers"/>
</dbReference>
<dbReference type="DNASU" id="140687"/>
<dbReference type="Ensembl" id="ENST00000243913.8">
    <property type="protein sequence ID" value="ENSP00000243913.4"/>
    <property type="gene ID" value="ENSG00000124091.10"/>
</dbReference>
<dbReference type="GeneID" id="140687"/>
<dbReference type="KEGG" id="hsa:140687"/>
<dbReference type="UCSC" id="uc061xwx.1">
    <property type="organism name" value="human"/>
</dbReference>
<dbReference type="AGR" id="HGNC:16099"/>
<dbReference type="CTD" id="140687"/>
<dbReference type="DisGeNET" id="140687"/>
<dbReference type="GeneCards" id="GCNT7"/>
<dbReference type="HGNC" id="HGNC:16099">
    <property type="gene designation" value="GCNT7"/>
</dbReference>
<dbReference type="HPA" id="ENSG00000124091">
    <property type="expression patterns" value="Tissue enriched (bone)"/>
</dbReference>
<dbReference type="neXtProt" id="NX_Q6ZNI0"/>
<dbReference type="PharmGKB" id="PA162389279"/>
<dbReference type="VEuPathDB" id="HostDB:ENSG00000124091"/>
<dbReference type="eggNOG" id="KOG0799">
    <property type="taxonomic scope" value="Eukaryota"/>
</dbReference>
<dbReference type="HOGENOM" id="CLU_032341_1_0_1"/>
<dbReference type="InParanoid" id="Q6ZNI0"/>
<dbReference type="OrthoDB" id="2019572at2759"/>
<dbReference type="PAN-GO" id="Q6ZNI0">
    <property type="GO annotations" value="1 GO annotation based on evolutionary models"/>
</dbReference>
<dbReference type="PhylomeDB" id="Q6ZNI0"/>
<dbReference type="TreeFam" id="TF315534"/>
<dbReference type="PathwayCommons" id="Q6ZNI0"/>
<dbReference type="Reactome" id="R-HSA-913709">
    <property type="pathway name" value="O-linked glycosylation of mucins"/>
</dbReference>
<dbReference type="SignaLink" id="Q6ZNI0"/>
<dbReference type="UniPathway" id="UPA00378"/>
<dbReference type="BioGRID-ORCS" id="140687">
    <property type="hits" value="10 hits in 378 CRISPR screens"/>
</dbReference>
<dbReference type="ChiTaRS" id="GCNT7">
    <property type="organism name" value="human"/>
</dbReference>
<dbReference type="GenomeRNAi" id="140687"/>
<dbReference type="Pharos" id="Q6ZNI0">
    <property type="development level" value="Tbio"/>
</dbReference>
<dbReference type="PRO" id="PR:Q6ZNI0"/>
<dbReference type="Proteomes" id="UP000005640">
    <property type="component" value="Chromosome 20"/>
</dbReference>
<dbReference type="RNAct" id="Q6ZNI0">
    <property type="molecule type" value="protein"/>
</dbReference>
<dbReference type="Bgee" id="ENSG00000124091">
    <property type="expression patterns" value="Expressed in male germ line stem cell (sensu Vertebrata) in testis and 86 other cell types or tissues"/>
</dbReference>
<dbReference type="ExpressionAtlas" id="Q6ZNI0">
    <property type="expression patterns" value="baseline and differential"/>
</dbReference>
<dbReference type="GO" id="GO:0000139">
    <property type="term" value="C:Golgi membrane"/>
    <property type="evidence" value="ECO:0007669"/>
    <property type="project" value="UniProtKB-SubCell"/>
</dbReference>
<dbReference type="GO" id="GO:0008375">
    <property type="term" value="F:acetylglucosaminyltransferase activity"/>
    <property type="evidence" value="ECO:0000318"/>
    <property type="project" value="GO_Central"/>
</dbReference>
<dbReference type="GO" id="GO:0006486">
    <property type="term" value="P:protein glycosylation"/>
    <property type="evidence" value="ECO:0007669"/>
    <property type="project" value="UniProtKB-UniPathway"/>
</dbReference>
<dbReference type="InterPro" id="IPR003406">
    <property type="entry name" value="Glyco_trans_14"/>
</dbReference>
<dbReference type="PANTHER" id="PTHR19297:SF178">
    <property type="entry name" value="BETA-1,3-GALACTOSYL-O-GLYCOSYL-GLYCOPROTEIN BETA-1,6-N-ACETYLGLUCOSAMINYLTRANSFERASE 7"/>
    <property type="match status" value="1"/>
</dbReference>
<dbReference type="PANTHER" id="PTHR19297">
    <property type="entry name" value="GLYCOSYLTRANSFERASE 14 FAMILY MEMBER"/>
    <property type="match status" value="1"/>
</dbReference>
<dbReference type="Pfam" id="PF02485">
    <property type="entry name" value="Branch"/>
    <property type="match status" value="1"/>
</dbReference>
<accession>Q6ZNI0</accession>
<accession>Q9HCV8</accession>
<gene>
    <name evidence="6" type="primary">GCNT7</name>
    <name evidence="6" type="synonym">C20orf105</name>
</gene>
<keyword id="KW-1015">Disulfide bond</keyword>
<keyword id="KW-0325">Glycoprotein</keyword>
<keyword id="KW-0328">Glycosyltransferase</keyword>
<keyword id="KW-0333">Golgi apparatus</keyword>
<keyword id="KW-0472">Membrane</keyword>
<keyword id="KW-1185">Reference proteome</keyword>
<keyword id="KW-0735">Signal-anchor</keyword>
<keyword id="KW-0808">Transferase</keyword>
<keyword id="KW-0812">Transmembrane</keyword>
<keyword id="KW-1133">Transmembrane helix</keyword>
<comment type="function">
    <text evidence="1">Probable glycosyltransferase.</text>
</comment>
<comment type="pathway">
    <text evidence="1">Protein modification; protein glycosylation.</text>
</comment>
<comment type="subcellular location">
    <subcellularLocation>
        <location evidence="1">Golgi apparatus membrane</location>
        <topology evidence="3">Single-pass type II membrane protein</topology>
    </subcellularLocation>
</comment>
<comment type="similarity">
    <text evidence="5">Belongs to the glycosyltransferase 14 family.</text>
</comment>
<organism>
    <name type="scientific">Homo sapiens</name>
    <name type="common">Human</name>
    <dbReference type="NCBI Taxonomy" id="9606"/>
    <lineage>
        <taxon>Eukaryota</taxon>
        <taxon>Metazoa</taxon>
        <taxon>Chordata</taxon>
        <taxon>Craniata</taxon>
        <taxon>Vertebrata</taxon>
        <taxon>Euteleostomi</taxon>
        <taxon>Mammalia</taxon>
        <taxon>Eutheria</taxon>
        <taxon>Euarchontoglires</taxon>
        <taxon>Primates</taxon>
        <taxon>Haplorrhini</taxon>
        <taxon>Catarrhini</taxon>
        <taxon>Hominidae</taxon>
        <taxon>Homo</taxon>
    </lineage>
</organism>
<name>GCNT7_HUMAN</name>